<sequence length="490" mass="55596">MERWWFNSMLFKKEFERRCGLNKSMGSLGPIENTSEDPNLKMKNIHSCSNVDYLFGVKDIWNFISDDTFLVSDRNGDSYSIYFDIENQIFEVDNDHSFLSELESSFSSYRNSSYLNNGFRGEDPYYNSYMSYMYDTQYSWNNHINSCIDNYLQSQICIDTSIISGSESYGDSYIYRAICSGESLNSSENEGSSRRTRTKGSDLTIRESSNDLEVTQKYKHLWVQCENCYGLNYKKFLKSKMNICEQCGYHLKMSSSDRIELLIDPGTWDPMDEDMVSLDPIEFHSEEEPYKDRIDSYQRKTGLTEAVQTGIGQLNGIPVAIGVMDFQFMGGSMGSVVGEKITRLIEHAANQNLPLIIVCASGGARMQEGSLSLMQMAKISSALYDYQLNKKLFYVSILTSPTTGGVTASFGMLGDIIIAEPNAYIAFAGKRVIEQTLNKTVPEGSQAAEYLFQKGLFDLIVPRNLLKSVLSELFKLHAFFPLNQKSSKIK</sequence>
<dbReference type="EC" id="2.1.3.15" evidence="2"/>
<dbReference type="EMBL" id="AF069288">
    <property type="protein sequence ID" value="AAC23997.1"/>
    <property type="status" value="ALT_INIT"/>
    <property type="molecule type" value="Genomic_DNA"/>
</dbReference>
<dbReference type="EMBL" id="DQ231562">
    <property type="protein sequence ID" value="ABB90050.1"/>
    <property type="status" value="ALT_INIT"/>
    <property type="molecule type" value="Genomic_DNA"/>
</dbReference>
<dbReference type="EMBL" id="DQ386163">
    <property type="protein sequence ID" value="ABD47066.1"/>
    <property type="status" value="ALT_INIT"/>
    <property type="molecule type" value="Genomic_DNA"/>
</dbReference>
<dbReference type="PIR" id="T07012">
    <property type="entry name" value="T07012"/>
</dbReference>
<dbReference type="RefSeq" id="YP_635648.1">
    <property type="nucleotide sequence ID" value="NC_008096.2"/>
</dbReference>
<dbReference type="SMR" id="Q2VEG8"/>
<dbReference type="FunCoup" id="Q2VEG8">
    <property type="interactions" value="303"/>
</dbReference>
<dbReference type="STRING" id="4113.Q2VEG8"/>
<dbReference type="GeneID" id="4099986"/>
<dbReference type="KEGG" id="sot:4099986"/>
<dbReference type="InParanoid" id="Q2VEG8"/>
<dbReference type="OrthoDB" id="10053020at2759"/>
<dbReference type="UniPathway" id="UPA00655">
    <property type="reaction ID" value="UER00711"/>
</dbReference>
<dbReference type="Proteomes" id="UP000011115">
    <property type="component" value="Unassembled WGS sequence"/>
</dbReference>
<dbReference type="GO" id="GO:0009317">
    <property type="term" value="C:acetyl-CoA carboxylase complex"/>
    <property type="evidence" value="ECO:0007669"/>
    <property type="project" value="InterPro"/>
</dbReference>
<dbReference type="GO" id="GO:0009570">
    <property type="term" value="C:chloroplast stroma"/>
    <property type="evidence" value="ECO:0007669"/>
    <property type="project" value="UniProtKB-SubCell"/>
</dbReference>
<dbReference type="GO" id="GO:0003989">
    <property type="term" value="F:acetyl-CoA carboxylase activity"/>
    <property type="evidence" value="ECO:0007669"/>
    <property type="project" value="InterPro"/>
</dbReference>
<dbReference type="GO" id="GO:0005524">
    <property type="term" value="F:ATP binding"/>
    <property type="evidence" value="ECO:0007669"/>
    <property type="project" value="UniProtKB-KW"/>
</dbReference>
<dbReference type="GO" id="GO:0016743">
    <property type="term" value="F:carboxyl- or carbamoyltransferase activity"/>
    <property type="evidence" value="ECO:0007669"/>
    <property type="project" value="UniProtKB-UniRule"/>
</dbReference>
<dbReference type="GO" id="GO:0008270">
    <property type="term" value="F:zinc ion binding"/>
    <property type="evidence" value="ECO:0007669"/>
    <property type="project" value="UniProtKB-UniRule"/>
</dbReference>
<dbReference type="GO" id="GO:0006633">
    <property type="term" value="P:fatty acid biosynthetic process"/>
    <property type="evidence" value="ECO:0000318"/>
    <property type="project" value="GO_Central"/>
</dbReference>
<dbReference type="GO" id="GO:2001295">
    <property type="term" value="P:malonyl-CoA biosynthetic process"/>
    <property type="evidence" value="ECO:0007669"/>
    <property type="project" value="UniProtKB-UniRule"/>
</dbReference>
<dbReference type="Gene3D" id="3.90.226.10">
    <property type="entry name" value="2-enoyl-CoA Hydratase, Chain A, domain 1"/>
    <property type="match status" value="1"/>
</dbReference>
<dbReference type="HAMAP" id="MF_01395">
    <property type="entry name" value="AcetylCoA_CT_beta"/>
    <property type="match status" value="1"/>
</dbReference>
<dbReference type="InterPro" id="IPR034733">
    <property type="entry name" value="AcCoA_carboxyl_beta"/>
</dbReference>
<dbReference type="InterPro" id="IPR000438">
    <property type="entry name" value="Acetyl_CoA_COase_Trfase_b_su"/>
</dbReference>
<dbReference type="InterPro" id="IPR029045">
    <property type="entry name" value="ClpP/crotonase-like_dom_sf"/>
</dbReference>
<dbReference type="InterPro" id="IPR011762">
    <property type="entry name" value="COA_CT_N"/>
</dbReference>
<dbReference type="NCBIfam" id="TIGR00515">
    <property type="entry name" value="accD"/>
    <property type="match status" value="1"/>
</dbReference>
<dbReference type="PANTHER" id="PTHR42995">
    <property type="entry name" value="ACETYL-COENZYME A CARBOXYLASE CARBOXYL TRANSFERASE SUBUNIT BETA, CHLOROPLASTIC"/>
    <property type="match status" value="1"/>
</dbReference>
<dbReference type="PANTHER" id="PTHR42995:SF5">
    <property type="entry name" value="ACETYL-COENZYME A CARBOXYLASE CARBOXYL TRANSFERASE SUBUNIT BETA, CHLOROPLASTIC"/>
    <property type="match status" value="1"/>
</dbReference>
<dbReference type="Pfam" id="PF01039">
    <property type="entry name" value="Carboxyl_trans"/>
    <property type="match status" value="1"/>
</dbReference>
<dbReference type="PRINTS" id="PR01070">
    <property type="entry name" value="ACCCTRFRASEB"/>
</dbReference>
<dbReference type="SUPFAM" id="SSF52096">
    <property type="entry name" value="ClpP/crotonase"/>
    <property type="match status" value="1"/>
</dbReference>
<dbReference type="PROSITE" id="PS50980">
    <property type="entry name" value="COA_CT_NTER"/>
    <property type="match status" value="1"/>
</dbReference>
<comment type="function">
    <text evidence="2">Component of the acetyl coenzyme A carboxylase (ACC) complex. Biotin carboxylase (BC) catalyzes the carboxylation of biotin on its carrier protein (BCCP) and then the CO(2) group is transferred by the transcarboxylase to acetyl-CoA to form malonyl-CoA.</text>
</comment>
<comment type="catalytic activity">
    <reaction evidence="2">
        <text>N(6)-carboxybiotinyl-L-lysyl-[protein] + acetyl-CoA = N(6)-biotinyl-L-lysyl-[protein] + malonyl-CoA</text>
        <dbReference type="Rhea" id="RHEA:54728"/>
        <dbReference type="Rhea" id="RHEA-COMP:10505"/>
        <dbReference type="Rhea" id="RHEA-COMP:10506"/>
        <dbReference type="ChEBI" id="CHEBI:57288"/>
        <dbReference type="ChEBI" id="CHEBI:57384"/>
        <dbReference type="ChEBI" id="CHEBI:83144"/>
        <dbReference type="ChEBI" id="CHEBI:83145"/>
        <dbReference type="EC" id="2.1.3.15"/>
    </reaction>
</comment>
<comment type="cofactor">
    <cofactor evidence="2">
        <name>Zn(2+)</name>
        <dbReference type="ChEBI" id="CHEBI:29105"/>
    </cofactor>
    <text evidence="2">Binds 1 zinc ion per subunit.</text>
</comment>
<comment type="pathway">
    <text evidence="2">Lipid metabolism; malonyl-CoA biosynthesis; malonyl-CoA from acetyl-CoA: step 1/1.</text>
</comment>
<comment type="subunit">
    <text evidence="1">Acetyl-CoA carboxylase is a heterohexamer composed of biotin carboxyl carrier protein, biotin carboxylase and 2 subunits each of ACCase subunit alpha and ACCase plastid-coded subunit beta (accD).</text>
</comment>
<comment type="subcellular location">
    <subcellularLocation>
        <location evidence="2">Plastid</location>
        <location evidence="2">Chloroplast stroma</location>
    </subcellularLocation>
</comment>
<comment type="tissue specificity">
    <text evidence="5">RNA expressed in leaf, root, stem, and tuber; the least expression occurs in stems. RNA persists even in senescent leaves.</text>
</comment>
<comment type="induction">
    <text>Not induced by light.</text>
</comment>
<comment type="similarity">
    <text evidence="2">Belongs to the AccD/PCCB family.</text>
</comment>
<comment type="sequence caution" evidence="6">
    <conflict type="erroneous initiation">
        <sequence resource="EMBL-CDS" id="AAC23997"/>
    </conflict>
    <text>Extended N-terminus.</text>
</comment>
<comment type="sequence caution" evidence="6">
    <conflict type="erroneous initiation">
        <sequence resource="EMBL-CDS" id="ABB90050"/>
    </conflict>
    <text>Extended N-terminus.</text>
</comment>
<comment type="sequence caution" evidence="6">
    <conflict type="erroneous initiation">
        <sequence resource="EMBL-CDS" id="ABD47066"/>
    </conflict>
    <text>Extended N-terminus.</text>
</comment>
<geneLocation type="chloroplast"/>
<gene>
    <name evidence="2" type="primary">accD</name>
</gene>
<protein>
    <recommendedName>
        <fullName evidence="2">Acetyl-coenzyme A carboxylase carboxyl transferase subunit beta, chloroplastic</fullName>
        <shortName evidence="2">ACCase subunit beta</shortName>
        <shortName evidence="2">Acetyl-CoA carboxylase carboxyltransferase subunit beta</shortName>
        <ecNumber evidence="2">2.1.3.15</ecNumber>
    </recommendedName>
</protein>
<organism>
    <name type="scientific">Solanum tuberosum</name>
    <name type="common">Potato</name>
    <dbReference type="NCBI Taxonomy" id="4113"/>
    <lineage>
        <taxon>Eukaryota</taxon>
        <taxon>Viridiplantae</taxon>
        <taxon>Streptophyta</taxon>
        <taxon>Embryophyta</taxon>
        <taxon>Tracheophyta</taxon>
        <taxon>Spermatophyta</taxon>
        <taxon>Magnoliopsida</taxon>
        <taxon>eudicotyledons</taxon>
        <taxon>Gunneridae</taxon>
        <taxon>Pentapetalae</taxon>
        <taxon>asterids</taxon>
        <taxon>lamiids</taxon>
        <taxon>Solanales</taxon>
        <taxon>Solanaceae</taxon>
        <taxon>Solanoideae</taxon>
        <taxon>Solaneae</taxon>
        <taxon>Solanum</taxon>
    </lineage>
</organism>
<accession>Q2VEG8</accession>
<accession>O78323</accession>
<reference key="1">
    <citation type="journal article" date="2004" name="Mol. Cells">
        <title>Characterization of the plastid-encoded carboxyltransferase subunit (accD) gene of potato.</title>
        <authorList>
            <person name="Lee S.S."/>
            <person name="Jeong W.J."/>
            <person name="Bae J.M."/>
            <person name="Bang J.W."/>
            <person name="Liu J.R."/>
            <person name="Harn C.H."/>
        </authorList>
    </citation>
    <scope>NUCLEOTIDE SEQUENCE [GENOMIC DNA]</scope>
    <scope>TRANSCRIPT ANALYSIS</scope>
    <scope>TISSUE SPECIFICITY</scope>
    <source>
        <strain>cv. Desiree</strain>
    </source>
</reference>
<reference key="2">
    <citation type="journal article" date="2006" name="Plant Cell Rep.">
        <title>The complete chloroplast genome sequences of Solanum tuberosum and comparative analysis with Solanaceae species identified the presence of a 241-bp deletion in cultivated potato chloroplast DNA sequence.</title>
        <authorList>
            <person name="Chung H.-J."/>
            <person name="Jung J.D."/>
            <person name="Park H.-W."/>
            <person name="Kim J.-H."/>
            <person name="Cha H.W."/>
            <person name="Min S.R."/>
            <person name="Jeong W.-J."/>
            <person name="Liu J.R."/>
        </authorList>
    </citation>
    <scope>NUCLEOTIDE SEQUENCE [LARGE SCALE GENOMIC DNA]</scope>
    <source>
        <strain>cv. Desiree</strain>
    </source>
</reference>
<reference key="3">
    <citation type="submission" date="2006-02" db="EMBL/GenBank/DDBJ databases">
        <title>Complete chloroplast genome sequences of Solanum tuberosum cultivar Desiree and comparative analyses with other Solanaceae genomes.</title>
        <authorList>
            <person name="Gargano D."/>
            <person name="Scotti N."/>
            <person name="Vezzi A."/>
            <person name="Bilardi A."/>
            <person name="Valle G."/>
            <person name="Grillo S."/>
            <person name="Cardi T."/>
        </authorList>
    </citation>
    <scope>NUCLEOTIDE SEQUENCE [LARGE SCALE GENOMIC DNA]</scope>
    <source>
        <strain>cv. Desiree</strain>
    </source>
</reference>
<feature type="chain" id="PRO_0000277580" description="Acetyl-coenzyme A carboxylase carboxyl transferase subunit beta, chloroplastic">
    <location>
        <begin position="1"/>
        <end position="490"/>
    </location>
</feature>
<feature type="domain" description="CoA carboxyltransferase N-terminal" evidence="3">
    <location>
        <begin position="221"/>
        <end position="490"/>
    </location>
</feature>
<feature type="zinc finger region" description="C4-type" evidence="2">
    <location>
        <begin position="225"/>
        <end position="247"/>
    </location>
</feature>
<feature type="region of interest" description="Disordered" evidence="4">
    <location>
        <begin position="184"/>
        <end position="203"/>
    </location>
</feature>
<feature type="binding site" evidence="2">
    <location>
        <position position="225"/>
    </location>
    <ligand>
        <name>Zn(2+)</name>
        <dbReference type="ChEBI" id="CHEBI:29105"/>
    </ligand>
</feature>
<feature type="binding site" evidence="2">
    <location>
        <position position="228"/>
    </location>
    <ligand>
        <name>Zn(2+)</name>
        <dbReference type="ChEBI" id="CHEBI:29105"/>
    </ligand>
</feature>
<feature type="binding site" evidence="2">
    <location>
        <position position="244"/>
    </location>
    <ligand>
        <name>Zn(2+)</name>
        <dbReference type="ChEBI" id="CHEBI:29105"/>
    </ligand>
</feature>
<feature type="binding site" evidence="2">
    <location>
        <position position="247"/>
    </location>
    <ligand>
        <name>Zn(2+)</name>
        <dbReference type="ChEBI" id="CHEBI:29105"/>
    </ligand>
</feature>
<feature type="sequence conflict" description="In Ref. 2; ABB90050." evidence="6" ref="2">
    <original>T</original>
    <variation>K</variation>
    <location>
        <position position="399"/>
    </location>
</feature>
<evidence type="ECO:0000250" key="1"/>
<evidence type="ECO:0000255" key="2">
    <source>
        <dbReference type="HAMAP-Rule" id="MF_01395"/>
    </source>
</evidence>
<evidence type="ECO:0000255" key="3">
    <source>
        <dbReference type="PROSITE-ProRule" id="PRU01136"/>
    </source>
</evidence>
<evidence type="ECO:0000256" key="4">
    <source>
        <dbReference type="SAM" id="MobiDB-lite"/>
    </source>
</evidence>
<evidence type="ECO:0000269" key="5">
    <source>
    </source>
</evidence>
<evidence type="ECO:0000305" key="6"/>
<proteinExistence type="evidence at transcript level"/>
<name>ACCD_SOLTU</name>
<keyword id="KW-0067">ATP-binding</keyword>
<keyword id="KW-0150">Chloroplast</keyword>
<keyword id="KW-0275">Fatty acid biosynthesis</keyword>
<keyword id="KW-0276">Fatty acid metabolism</keyword>
<keyword id="KW-0444">Lipid biosynthesis</keyword>
<keyword id="KW-0443">Lipid metabolism</keyword>
<keyword id="KW-0479">Metal-binding</keyword>
<keyword id="KW-0547">Nucleotide-binding</keyword>
<keyword id="KW-0934">Plastid</keyword>
<keyword id="KW-1185">Reference proteome</keyword>
<keyword id="KW-0808">Transferase</keyword>
<keyword id="KW-0862">Zinc</keyword>
<keyword id="KW-0863">Zinc-finger</keyword>